<proteinExistence type="inferred from homology"/>
<comment type="function">
    <text evidence="1">Could be part of a sulfur-relay system.</text>
</comment>
<comment type="subcellular location">
    <subcellularLocation>
        <location evidence="1">Cytoplasm</location>
    </subcellularLocation>
</comment>
<comment type="similarity">
    <text evidence="2">Belongs to the DsrE/TusD family.</text>
</comment>
<name>TUSD_VIBVY</name>
<feature type="chain" id="PRO_0000214740" description="Sulfurtransferase TusD homolog">
    <location>
        <begin position="1"/>
        <end position="131"/>
    </location>
</feature>
<feature type="active site" description="Cysteine persulfide intermediate" evidence="1">
    <location>
        <position position="81"/>
    </location>
</feature>
<accession>Q7MH37</accession>
<sequence>MSALRYTLVVNGSVYGSQSARTAYQFATALIEKGHTLVSVFFYQDGVTNGTELTVPANDEFHLTKAWQQLAKQHNVRLETCVAAALRRGVVSQSEASQHGLLQHNLAEGFEQAGLGSLAEAMLTQDRVVQF</sequence>
<organism>
    <name type="scientific">Vibrio vulnificus (strain YJ016)</name>
    <dbReference type="NCBI Taxonomy" id="196600"/>
    <lineage>
        <taxon>Bacteria</taxon>
        <taxon>Pseudomonadati</taxon>
        <taxon>Pseudomonadota</taxon>
        <taxon>Gammaproteobacteria</taxon>
        <taxon>Vibrionales</taxon>
        <taxon>Vibrionaceae</taxon>
        <taxon>Vibrio</taxon>
    </lineage>
</organism>
<keyword id="KW-0963">Cytoplasm</keyword>
<keyword id="KW-0808">Transferase</keyword>
<reference key="1">
    <citation type="journal article" date="2003" name="Genome Res.">
        <title>Comparative genome analysis of Vibrio vulnificus, a marine pathogen.</title>
        <authorList>
            <person name="Chen C.-Y."/>
            <person name="Wu K.-M."/>
            <person name="Chang Y.-C."/>
            <person name="Chang C.-H."/>
            <person name="Tsai H.-C."/>
            <person name="Liao T.-L."/>
            <person name="Liu Y.-M."/>
            <person name="Chen H.-J."/>
            <person name="Shen A.B.-T."/>
            <person name="Li J.-C."/>
            <person name="Su T.-L."/>
            <person name="Shao C.-P."/>
            <person name="Lee C.-T."/>
            <person name="Hor L.-I."/>
            <person name="Tsai S.-F."/>
        </authorList>
    </citation>
    <scope>NUCLEOTIDE SEQUENCE [LARGE SCALE GENOMIC DNA]</scope>
    <source>
        <strain>YJ016</strain>
    </source>
</reference>
<protein>
    <recommendedName>
        <fullName>Sulfurtransferase TusD homolog</fullName>
        <ecNumber>2.8.1.-</ecNumber>
    </recommendedName>
</protein>
<dbReference type="EC" id="2.8.1.-"/>
<dbReference type="EMBL" id="BA000037">
    <property type="protein sequence ID" value="BAC95799.1"/>
    <property type="molecule type" value="Genomic_DNA"/>
</dbReference>
<dbReference type="RefSeq" id="WP_011151308.1">
    <property type="nucleotide sequence ID" value="NC_005139.1"/>
</dbReference>
<dbReference type="SMR" id="Q7MH37"/>
<dbReference type="STRING" id="672.VV93_v1c27630"/>
<dbReference type="KEGG" id="vvy:VV3035"/>
<dbReference type="PATRIC" id="fig|196600.6.peg.3012"/>
<dbReference type="eggNOG" id="COG1553">
    <property type="taxonomic scope" value="Bacteria"/>
</dbReference>
<dbReference type="HOGENOM" id="CLU_132095_0_0_6"/>
<dbReference type="Proteomes" id="UP000002675">
    <property type="component" value="Chromosome I"/>
</dbReference>
<dbReference type="GO" id="GO:1990228">
    <property type="term" value="C:sulfurtransferase complex"/>
    <property type="evidence" value="ECO:0007669"/>
    <property type="project" value="TreeGrafter"/>
</dbReference>
<dbReference type="GO" id="GO:0097163">
    <property type="term" value="F:sulfur carrier activity"/>
    <property type="evidence" value="ECO:0007669"/>
    <property type="project" value="TreeGrafter"/>
</dbReference>
<dbReference type="GO" id="GO:0016783">
    <property type="term" value="F:sulfurtransferase activity"/>
    <property type="evidence" value="ECO:0007669"/>
    <property type="project" value="InterPro"/>
</dbReference>
<dbReference type="GO" id="GO:0002143">
    <property type="term" value="P:tRNA wobble position uridine thiolation"/>
    <property type="evidence" value="ECO:0007669"/>
    <property type="project" value="TreeGrafter"/>
</dbReference>
<dbReference type="FunFam" id="3.40.1260.10:FF:000001">
    <property type="entry name" value="Sulfurtransferase TusD"/>
    <property type="match status" value="1"/>
</dbReference>
<dbReference type="Gene3D" id="3.40.1260.10">
    <property type="entry name" value="DsrEFH-like"/>
    <property type="match status" value="1"/>
</dbReference>
<dbReference type="InterPro" id="IPR027396">
    <property type="entry name" value="DsrEFH-like"/>
</dbReference>
<dbReference type="InterPro" id="IPR003787">
    <property type="entry name" value="Sulphur_relay_DsrE/F-like"/>
</dbReference>
<dbReference type="InterPro" id="IPR017463">
    <property type="entry name" value="Sulphur_relay_TusD/DsrE"/>
</dbReference>
<dbReference type="NCBIfam" id="NF001237">
    <property type="entry name" value="PRK00207.1"/>
    <property type="match status" value="1"/>
</dbReference>
<dbReference type="NCBIfam" id="TIGR03012">
    <property type="entry name" value="sulf_tusD_dsrE"/>
    <property type="match status" value="1"/>
</dbReference>
<dbReference type="PANTHER" id="PTHR34874">
    <property type="entry name" value="PROTEIN YCHN"/>
    <property type="match status" value="1"/>
</dbReference>
<dbReference type="PANTHER" id="PTHR34874:SF3">
    <property type="entry name" value="SULFURTRANSFERASE TUSD"/>
    <property type="match status" value="1"/>
</dbReference>
<dbReference type="Pfam" id="PF02635">
    <property type="entry name" value="DsrE"/>
    <property type="match status" value="1"/>
</dbReference>
<dbReference type="SUPFAM" id="SSF75169">
    <property type="entry name" value="DsrEFH-like"/>
    <property type="match status" value="1"/>
</dbReference>
<gene>
    <name type="primary">tusD</name>
    <name type="ordered locus">VV3035</name>
</gene>
<evidence type="ECO:0000250" key="1"/>
<evidence type="ECO:0000305" key="2"/>